<proteinExistence type="inferred from homology"/>
<gene>
    <name type="ordered locus">SACOL1902</name>
</gene>
<feature type="chain" id="PRO_0000109983" description="UPF0342 protein SACOL1902">
    <location>
        <begin position="1"/>
        <end position="114"/>
    </location>
</feature>
<evidence type="ECO:0000255" key="1">
    <source>
        <dbReference type="HAMAP-Rule" id="MF_01526"/>
    </source>
</evidence>
<protein>
    <recommendedName>
        <fullName evidence="1">UPF0342 protein SACOL1902</fullName>
    </recommendedName>
</protein>
<reference key="1">
    <citation type="journal article" date="2005" name="J. Bacteriol.">
        <title>Insights on evolution of virulence and resistance from the complete genome analysis of an early methicillin-resistant Staphylococcus aureus strain and a biofilm-producing methicillin-resistant Staphylococcus epidermidis strain.</title>
        <authorList>
            <person name="Gill S.R."/>
            <person name="Fouts D.E."/>
            <person name="Archer G.L."/>
            <person name="Mongodin E.F."/>
            <person name="DeBoy R.T."/>
            <person name="Ravel J."/>
            <person name="Paulsen I.T."/>
            <person name="Kolonay J.F."/>
            <person name="Brinkac L.M."/>
            <person name="Beanan M.J."/>
            <person name="Dodson R.J."/>
            <person name="Daugherty S.C."/>
            <person name="Madupu R."/>
            <person name="Angiuoli S.V."/>
            <person name="Durkin A.S."/>
            <person name="Haft D.H."/>
            <person name="Vamathevan J.J."/>
            <person name="Khouri H."/>
            <person name="Utterback T.R."/>
            <person name="Lee C."/>
            <person name="Dimitrov G."/>
            <person name="Jiang L."/>
            <person name="Qin H."/>
            <person name="Weidman J."/>
            <person name="Tran K."/>
            <person name="Kang K.H."/>
            <person name="Hance I.R."/>
            <person name="Nelson K.E."/>
            <person name="Fraser C.M."/>
        </authorList>
    </citation>
    <scope>NUCLEOTIDE SEQUENCE [LARGE SCALE GENOMIC DNA]</scope>
    <source>
        <strain>COL</strain>
    </source>
</reference>
<sequence>MAVNLYDYANQLEQALRESEEYKAIKEAFANVKANEESKKLFDEFRETQINFQQKQMQGEEIAEEDLQKAQEQAQAIEKDENISALMNAEQKMSQVFQEINQIIVKPLDEIYAD</sequence>
<organism>
    <name type="scientific">Staphylococcus aureus (strain COL)</name>
    <dbReference type="NCBI Taxonomy" id="93062"/>
    <lineage>
        <taxon>Bacteria</taxon>
        <taxon>Bacillati</taxon>
        <taxon>Bacillota</taxon>
        <taxon>Bacilli</taxon>
        <taxon>Bacillales</taxon>
        <taxon>Staphylococcaceae</taxon>
        <taxon>Staphylococcus</taxon>
    </lineage>
</organism>
<dbReference type="EMBL" id="CP000046">
    <property type="protein sequence ID" value="AAW36914.1"/>
    <property type="molecule type" value="Genomic_DNA"/>
</dbReference>
<dbReference type="RefSeq" id="WP_000290301.1">
    <property type="nucleotide sequence ID" value="NZ_JBGOFO010000011.1"/>
</dbReference>
<dbReference type="SMR" id="Q5HET0"/>
<dbReference type="KEGG" id="sac:SACOL1902"/>
<dbReference type="HOGENOM" id="CLU_140243_3_0_9"/>
<dbReference type="Proteomes" id="UP000000530">
    <property type="component" value="Chromosome"/>
</dbReference>
<dbReference type="Gene3D" id="1.20.1500.10">
    <property type="entry name" value="YheA/YmcA-like"/>
    <property type="match status" value="1"/>
</dbReference>
<dbReference type="HAMAP" id="MF_01526">
    <property type="entry name" value="UPF0342"/>
    <property type="match status" value="1"/>
</dbReference>
<dbReference type="InterPro" id="IPR010368">
    <property type="entry name" value="Com_YlbF"/>
</dbReference>
<dbReference type="InterPro" id="IPR023378">
    <property type="entry name" value="YheA/YmcA-like_dom_sf"/>
</dbReference>
<dbReference type="NCBIfam" id="NF010212">
    <property type="entry name" value="PRK13676.1-5"/>
    <property type="match status" value="1"/>
</dbReference>
<dbReference type="Pfam" id="PF06133">
    <property type="entry name" value="Com_YlbF"/>
    <property type="match status" value="1"/>
</dbReference>
<dbReference type="SUPFAM" id="SSF158622">
    <property type="entry name" value="YheA/YmcA-like"/>
    <property type="match status" value="1"/>
</dbReference>
<name>Y1902_STAAC</name>
<accession>Q5HET0</accession>
<comment type="similarity">
    <text evidence="1">Belongs to the UPF0342 family.</text>
</comment>